<feature type="chain" id="PRO_0000442164" description="Desertorin synthase">
    <location>
        <begin position="1"/>
        <end position="1733"/>
    </location>
</feature>
<feature type="domain" description="Ketosynthase family 3 (KS3)" evidence="5">
    <location>
        <begin position="372"/>
        <end position="799"/>
    </location>
</feature>
<feature type="domain" description="PKS/mFAS DH" evidence="6">
    <location>
        <begin position="1288"/>
        <end position="1598"/>
    </location>
</feature>
<feature type="domain" description="Carrier" evidence="4">
    <location>
        <begin position="1659"/>
        <end position="1733"/>
    </location>
</feature>
<feature type="region of interest" description="N-terminal acylcarrier protein transacylase domain (SAT)" evidence="3">
    <location>
        <begin position="21"/>
        <end position="358"/>
    </location>
</feature>
<feature type="region of interest" description="Disordered" evidence="7">
    <location>
        <begin position="406"/>
        <end position="429"/>
    </location>
</feature>
<feature type="region of interest" description="Malonyl-CoA:ACP transacylase (MAT) domain" evidence="3">
    <location>
        <begin position="903"/>
        <end position="1211"/>
    </location>
</feature>
<feature type="region of interest" description="N-terminal hotdog fold" evidence="6">
    <location>
        <begin position="1288"/>
        <end position="1420"/>
    </location>
</feature>
<feature type="region of interest" description="Product template (PT) domain" evidence="3">
    <location>
        <begin position="1299"/>
        <end position="1594"/>
    </location>
</feature>
<feature type="region of interest" description="C-terminal hotdog fold" evidence="6">
    <location>
        <begin position="1448"/>
        <end position="1598"/>
    </location>
</feature>
<feature type="region of interest" description="Disordered" evidence="7">
    <location>
        <begin position="1608"/>
        <end position="1659"/>
    </location>
</feature>
<feature type="compositionally biased region" description="Basic and acidic residues" evidence="7">
    <location>
        <begin position="406"/>
        <end position="422"/>
    </location>
</feature>
<feature type="compositionally biased region" description="Low complexity" evidence="7">
    <location>
        <begin position="1627"/>
        <end position="1643"/>
    </location>
</feature>
<feature type="active site" description="For beta-ketoacyl synthase activity" evidence="5">
    <location>
        <position position="544"/>
    </location>
</feature>
<feature type="active site" description="For beta-ketoacyl synthase activity" evidence="5">
    <location>
        <position position="679"/>
    </location>
</feature>
<feature type="active site" description="For beta-ketoacyl synthase activity" evidence="5">
    <location>
        <position position="718"/>
    </location>
</feature>
<feature type="active site" description="Proton acceptor; for dehydratase activity" evidence="6">
    <location>
        <position position="1320"/>
    </location>
</feature>
<feature type="active site" description="Proton donor; for dehydratase activity" evidence="6">
    <location>
        <position position="1506"/>
    </location>
</feature>
<feature type="modified residue" description="O-(pantetheine 4'-phosphoryl)serine" evidence="4">
    <location>
        <position position="1696"/>
    </location>
</feature>
<name>DESS_ASPDE</name>
<comment type="function">
    <text evidence="8">Non-reducing polyketide synthase; part of the gene cluster that mediates the biosynthesis of the bicoumarin desertorin (PubMed:26389790). The non-reducing polyketide synthase desS first catalyzes the formation of the pentaketidic 4,7-dihydroxy-5-methylcoumarin from acetyl coenzyme A and 4 malonyl coenzyme A molecules (PubMed:26389790). Further O-methylation by desB leads to the formation of 7-demethylsiderin (PubMed:26389790). Then, an oxidative phenol coupling catalyzed by the cytochrome P450 monooxygenase desC forms the 6,8'-dimer M-desertorin A via dimerization the monomeric precursor, 7-demethylsiderin (PubMed:26389790). M-desertorin A is further converted to M-desertorin C (PubMed:26389790).</text>
</comment>
<comment type="cofactor">
    <cofactor evidence="1">
        <name>pantetheine 4'-phosphate</name>
        <dbReference type="ChEBI" id="CHEBI:47942"/>
    </cofactor>
    <text evidence="3">Binds 1 phosphopantetheine covalently.</text>
</comment>
<comment type="pathway">
    <text evidence="8">Secondary metabolite biosynthesis.</text>
</comment>
<comment type="domain">
    <text evidence="2">Multidomain protein; including a starter unit:ACP transacylase (SAT) that selects the starter unit; a ketosynthase (KS) that catalyzes repeated decarboxylative condensation to elongate the polyketide backbone; a malonyl-CoA:ACP transacylase (MAT) that selects and transfers the extender unit malonyl-CoA; a product template (PT) domain that controls the immediate cyclization regioselectivity of the reactive polyketide backbone; and an acyl-carrier protein (ACP) that serves as the tether of the growing and completed polyketide via its phosphopantetheinyl arm (By similarity).</text>
</comment>
<organism>
    <name type="scientific">Aspergillus desertorum</name>
    <name type="common">Emericella desertorum</name>
    <dbReference type="NCBI Taxonomy" id="1810909"/>
    <lineage>
        <taxon>Eukaryota</taxon>
        <taxon>Fungi</taxon>
        <taxon>Dikarya</taxon>
        <taxon>Ascomycota</taxon>
        <taxon>Pezizomycotina</taxon>
        <taxon>Eurotiomycetes</taxon>
        <taxon>Eurotiomycetidae</taxon>
        <taxon>Eurotiales</taxon>
        <taxon>Aspergillaceae</taxon>
        <taxon>Aspergillus</taxon>
        <taxon>Aspergillus subgen. Nidulantes</taxon>
    </lineage>
</organism>
<keyword id="KW-0012">Acyltransferase</keyword>
<keyword id="KW-0596">Phosphopantetheine</keyword>
<keyword id="KW-0597">Phosphoprotein</keyword>
<keyword id="KW-0808">Transferase</keyword>
<sequence>MKVLFFSNKFPVEEHADLFQRIRQQSRSSRHAVLRQLLDECTAAVREEIRLLPAEIRTRLPPFQSILDLAEGFRWERSPLAGTFECVFLCLAELCLFVGDYEARPQAFKFTRSDSVFTGLGLGFLAATAIVASPTLIDVPATAADVIRIAMRAGLVVYHQGQNLEPQSLSAPLQSWTTLVKRLGEEAVQRELDCFNSAIPRPSQIYISVVEPDGSVFINGPPSIMRLLFSTPGPLQSAPRAPLPVYGGPCHAAHLYDRSHVSWIVKHVRSEIAWREFSDAAPLLSMADGQPLRAQTALELFESAAYVLLTGIIRWGNVLAALEEREDGAIQIESCGHSTPVEKLMRVLHAPTRDLTEWLSDEIEAVPGTHADCRIAVVGMSCRLPGADDLEHFWELLEQGRDVHQHVPPDRYDVQSHTDPTGRRMNTSQTPFGCFIDSPGLFDAGFFDMSPREAGQTDPTHRLALLTAYEALQQSGYIPDRTLSTIRETVATIYGQCSDDYREANAGQEIDMYFIPGNYRAFAPGRISYFFKFSGPSFSCDTACSASLAAVQIACATLSRGEANMVVAGGLNILTSSDSFAGLSRAHFLSKTGGCKVFDDGADGYCRADGVGSLVLKRLADAQRDNDNILGVILAAATNHSSAAVSITHPHAPTQEELYRNVLRQAGVSPLDVDLVEMHGTGTQAGDAAEIESVTRVFSPSRRSERLYIGSVKANLGHGEAAAGVTALIKALLIFQHNAIPKHVGIKTALNSRFPDLGQLNVHIPGETVPWSPRPNRKRYVMVNNFSAAGGNTALLLEEPPQRPTPGPACAQTRFVVTVSAKNPLSLRRNLERLMAFLRQHQPPVHLGSLAYTTTARRIHYPHRIAVQGASIADIIKHLELRLADLSLAHPQGAVARPPPIAFVFSGQGSFYPGISHDLLEHYPPYAREIHQLDALCLRHGFPSILPALTSSENSPSPLVTQLTTVCVQIALTHLWKSLAITPAVVIGASLGEYAALHATGALSASDTIFLVGQRGLLMQDLCTANTHTMLAVQATANEIAGCVPDSLSYEVACINSHRSITIAGTRSNITAIKASLESRGYRATELNVPYAFHSSHMDPILEKFNAIAQQATARALKVPLISPLLVDVLHEHTTLPASYLAEATRGRVRFSEALEKAHQATLITDQTVFVEIGIHPTYSNAVRSTVHNIAAVVPTLRSDQDNWHTLAGSMAALYEAAAGLDWNAWFEPFEPELRLLDLPRYAWNLKNHWIQHNGDWLLWKDKDRDRDNGKCMTHPDDGRGLYTPLLHRIVEETFWAGGGRVVMESNVHQEEFFAVASGHKMCGRPVVSVFSYPDMALSLARFVYTKVHPDISPPAMDFGNVHIFEGLIPHKDRSSPQWVRLQIKTTSVKHQLQVSFHRVGEDRVDQLATGTVSVGNAASWLSEWSGIAHLVSSRIKALQDLVHEGRADRLTRDTVYHLFRNSIVDYSPAYRGIQSAVIDGLEAVADVVLASSNMDRWTAPPHHVDSIAHVCGFVLNAGNAADHDNINTVYVMEGWRSMRFAKPLVSGRLYRSYVRMVPARDTGFFSGDVYVLDVAEDEVTGLLAGVTLRPLPRILMHRFFDPADDAHNWGNSPAKPEAKPEMVPTSGSSSAAGSPSGSSAGPLSIPERLADPSETSFQSKASKVSKALALIASETGIDMQDLNDETCLAQIGVDSLLSLVLVEKFALELGVHFPGSFFLDFPTVGEVKRQML</sequence>
<reference key="1">
    <citation type="journal article" date="2015" name="J. Am. Chem. Soc.">
        <title>Cytochrome P450-catalyzed regio- and stereoselective phenol coupling of fungal natural products.</title>
        <authorList>
            <person name="Mazzaferro L.S."/>
            <person name="Huettel W."/>
            <person name="Fries A."/>
            <person name="Mueller M."/>
        </authorList>
    </citation>
    <scope>NUCLEOTIDE SEQUENCE [GENOMIC DNA]</scope>
    <scope>FUNCTION</scope>
    <scope>PATHWAY</scope>
    <source>
        <strain>CBS 653.73 / NBRC 30840</strain>
    </source>
</reference>
<proteinExistence type="inferred from homology"/>
<evidence type="ECO:0000250" key="1">
    <source>
        <dbReference type="UniProtKB" id="A0A0K0MCJ4"/>
    </source>
</evidence>
<evidence type="ECO:0000250" key="2">
    <source>
        <dbReference type="UniProtKB" id="Q5B0D0"/>
    </source>
</evidence>
<evidence type="ECO:0000255" key="3"/>
<evidence type="ECO:0000255" key="4">
    <source>
        <dbReference type="PROSITE-ProRule" id="PRU00258"/>
    </source>
</evidence>
<evidence type="ECO:0000255" key="5">
    <source>
        <dbReference type="PROSITE-ProRule" id="PRU01348"/>
    </source>
</evidence>
<evidence type="ECO:0000255" key="6">
    <source>
        <dbReference type="PROSITE-ProRule" id="PRU01363"/>
    </source>
</evidence>
<evidence type="ECO:0000256" key="7">
    <source>
        <dbReference type="SAM" id="MobiDB-lite"/>
    </source>
</evidence>
<evidence type="ECO:0000269" key="8">
    <source>
    </source>
</evidence>
<evidence type="ECO:0000303" key="9">
    <source>
    </source>
</evidence>
<evidence type="ECO:0000305" key="10">
    <source>
    </source>
</evidence>
<protein>
    <recommendedName>
        <fullName evidence="9">Desertorin synthase</fullName>
        <ecNumber evidence="10">2.3.1.-</ecNumber>
    </recommendedName>
    <alternativeName>
        <fullName evidence="9">Desertorin biosynthesis cluster protein S</fullName>
    </alternativeName>
    <alternativeName>
        <fullName evidence="9">Non-reducing polyketide synthase desS</fullName>
    </alternativeName>
</protein>
<gene>
    <name evidence="9" type="primary">desS</name>
    <name evidence="9" type="ORF">EMD_0002</name>
</gene>
<dbReference type="EC" id="2.3.1.-" evidence="10"/>
<dbReference type="EMBL" id="KT583602">
    <property type="protein sequence ID" value="ALG03237.1"/>
    <property type="molecule type" value="Genomic_DNA"/>
</dbReference>
<dbReference type="SMR" id="A0A0N9HNS9"/>
<dbReference type="GO" id="GO:0004312">
    <property type="term" value="F:fatty acid synthase activity"/>
    <property type="evidence" value="ECO:0007669"/>
    <property type="project" value="TreeGrafter"/>
</dbReference>
<dbReference type="GO" id="GO:0006633">
    <property type="term" value="P:fatty acid biosynthetic process"/>
    <property type="evidence" value="ECO:0007669"/>
    <property type="project" value="TreeGrafter"/>
</dbReference>
<dbReference type="GO" id="GO:0044550">
    <property type="term" value="P:secondary metabolite biosynthetic process"/>
    <property type="evidence" value="ECO:0007669"/>
    <property type="project" value="TreeGrafter"/>
</dbReference>
<dbReference type="CDD" id="cd00833">
    <property type="entry name" value="PKS"/>
    <property type="match status" value="1"/>
</dbReference>
<dbReference type="Gene3D" id="3.30.70.3290">
    <property type="match status" value="1"/>
</dbReference>
<dbReference type="Gene3D" id="3.40.47.10">
    <property type="match status" value="1"/>
</dbReference>
<dbReference type="Gene3D" id="1.10.1200.10">
    <property type="entry name" value="ACP-like"/>
    <property type="match status" value="1"/>
</dbReference>
<dbReference type="Gene3D" id="3.40.366.10">
    <property type="entry name" value="Malonyl-Coenzyme A Acyl Carrier Protein, domain 2"/>
    <property type="match status" value="2"/>
</dbReference>
<dbReference type="Gene3D" id="3.10.129.110">
    <property type="entry name" value="Polyketide synthase dehydratase"/>
    <property type="match status" value="1"/>
</dbReference>
<dbReference type="InterPro" id="IPR001227">
    <property type="entry name" value="Ac_transferase_dom_sf"/>
</dbReference>
<dbReference type="InterPro" id="IPR036736">
    <property type="entry name" value="ACP-like_sf"/>
</dbReference>
<dbReference type="InterPro" id="IPR014043">
    <property type="entry name" value="Acyl_transferase_dom"/>
</dbReference>
<dbReference type="InterPro" id="IPR016035">
    <property type="entry name" value="Acyl_Trfase/lysoPLipase"/>
</dbReference>
<dbReference type="InterPro" id="IPR014031">
    <property type="entry name" value="Ketoacyl_synth_C"/>
</dbReference>
<dbReference type="InterPro" id="IPR014030">
    <property type="entry name" value="Ketoacyl_synth_N"/>
</dbReference>
<dbReference type="InterPro" id="IPR016036">
    <property type="entry name" value="Malonyl_transacylase_ACP-bd"/>
</dbReference>
<dbReference type="InterPro" id="IPR020841">
    <property type="entry name" value="PKS_Beta-ketoAc_synthase_dom"/>
</dbReference>
<dbReference type="InterPro" id="IPR042104">
    <property type="entry name" value="PKS_dehydratase_sf"/>
</dbReference>
<dbReference type="InterPro" id="IPR049900">
    <property type="entry name" value="PKS_mFAS_DH"/>
</dbReference>
<dbReference type="InterPro" id="IPR050091">
    <property type="entry name" value="PKS_NRPS_Biosynth_Enz"/>
</dbReference>
<dbReference type="InterPro" id="IPR009081">
    <property type="entry name" value="PP-bd_ACP"/>
</dbReference>
<dbReference type="InterPro" id="IPR030918">
    <property type="entry name" value="PT_fungal_PKS"/>
</dbReference>
<dbReference type="InterPro" id="IPR032088">
    <property type="entry name" value="SAT"/>
</dbReference>
<dbReference type="InterPro" id="IPR016039">
    <property type="entry name" value="Thiolase-like"/>
</dbReference>
<dbReference type="NCBIfam" id="TIGR04532">
    <property type="entry name" value="PT_fungal_PKS"/>
    <property type="match status" value="1"/>
</dbReference>
<dbReference type="PANTHER" id="PTHR43775">
    <property type="entry name" value="FATTY ACID SYNTHASE"/>
    <property type="match status" value="1"/>
</dbReference>
<dbReference type="PANTHER" id="PTHR43775:SF37">
    <property type="entry name" value="SI:DKEY-61P9.11"/>
    <property type="match status" value="1"/>
</dbReference>
<dbReference type="Pfam" id="PF00698">
    <property type="entry name" value="Acyl_transf_1"/>
    <property type="match status" value="1"/>
</dbReference>
<dbReference type="Pfam" id="PF22621">
    <property type="entry name" value="CurL-like_PKS_C"/>
    <property type="match status" value="1"/>
</dbReference>
<dbReference type="Pfam" id="PF00109">
    <property type="entry name" value="ketoacyl-synt"/>
    <property type="match status" value="1"/>
</dbReference>
<dbReference type="Pfam" id="PF02801">
    <property type="entry name" value="Ketoacyl-synt_C"/>
    <property type="match status" value="1"/>
</dbReference>
<dbReference type="Pfam" id="PF00550">
    <property type="entry name" value="PP-binding"/>
    <property type="match status" value="1"/>
</dbReference>
<dbReference type="Pfam" id="PF16073">
    <property type="entry name" value="SAT"/>
    <property type="match status" value="1"/>
</dbReference>
<dbReference type="SMART" id="SM00827">
    <property type="entry name" value="PKS_AT"/>
    <property type="match status" value="1"/>
</dbReference>
<dbReference type="SMART" id="SM00825">
    <property type="entry name" value="PKS_KS"/>
    <property type="match status" value="1"/>
</dbReference>
<dbReference type="SUPFAM" id="SSF47336">
    <property type="entry name" value="ACP-like"/>
    <property type="match status" value="1"/>
</dbReference>
<dbReference type="SUPFAM" id="SSF52151">
    <property type="entry name" value="FabD/lysophospholipase-like"/>
    <property type="match status" value="1"/>
</dbReference>
<dbReference type="SUPFAM" id="SSF55048">
    <property type="entry name" value="Probable ACP-binding domain of malonyl-CoA ACP transacylase"/>
    <property type="match status" value="1"/>
</dbReference>
<dbReference type="SUPFAM" id="SSF53901">
    <property type="entry name" value="Thiolase-like"/>
    <property type="match status" value="1"/>
</dbReference>
<dbReference type="PROSITE" id="PS50075">
    <property type="entry name" value="CARRIER"/>
    <property type="match status" value="1"/>
</dbReference>
<dbReference type="PROSITE" id="PS52004">
    <property type="entry name" value="KS3_2"/>
    <property type="match status" value="1"/>
</dbReference>
<dbReference type="PROSITE" id="PS52019">
    <property type="entry name" value="PKS_MFAS_DH"/>
    <property type="match status" value="1"/>
</dbReference>
<accession>A0A0N9HNS9</accession>